<reference key="1">
    <citation type="journal article" date="2009" name="Appl. Environ. Microbiol.">
        <title>Genome analysis of the meat starter culture bacterium Staphylococcus carnosus TM300.</title>
        <authorList>
            <person name="Rosenstein R."/>
            <person name="Nerz C."/>
            <person name="Biswas L."/>
            <person name="Resch A."/>
            <person name="Raddatz G."/>
            <person name="Schuster S.C."/>
            <person name="Goetz F."/>
        </authorList>
    </citation>
    <scope>NUCLEOTIDE SEQUENCE [LARGE SCALE GENOMIC DNA]</scope>
    <source>
        <strain>TM300</strain>
    </source>
</reference>
<accession>B9DPJ9</accession>
<protein>
    <recommendedName>
        <fullName evidence="1">Small ribosomal subunit protein bS16</fullName>
    </recommendedName>
    <alternativeName>
        <fullName evidence="2">30S ribosomal protein S16</fullName>
    </alternativeName>
</protein>
<proteinExistence type="inferred from homology"/>
<gene>
    <name evidence="1" type="primary">rpsP</name>
    <name type="ordered locus">Sca_0863</name>
</gene>
<comment type="similarity">
    <text evidence="1">Belongs to the bacterial ribosomal protein bS16 family.</text>
</comment>
<dbReference type="EMBL" id="AM295250">
    <property type="protein sequence ID" value="CAL27773.1"/>
    <property type="molecule type" value="Genomic_DNA"/>
</dbReference>
<dbReference type="RefSeq" id="WP_015900114.1">
    <property type="nucleotide sequence ID" value="NC_012121.1"/>
</dbReference>
<dbReference type="SMR" id="B9DPJ9"/>
<dbReference type="GeneID" id="93793295"/>
<dbReference type="KEGG" id="sca:SCA_0863"/>
<dbReference type="eggNOG" id="COG0228">
    <property type="taxonomic scope" value="Bacteria"/>
</dbReference>
<dbReference type="HOGENOM" id="CLU_100590_5_0_9"/>
<dbReference type="OrthoDB" id="9807878at2"/>
<dbReference type="BioCyc" id="SCAR396513:SCA_RS04360-MONOMER"/>
<dbReference type="Proteomes" id="UP000000444">
    <property type="component" value="Chromosome"/>
</dbReference>
<dbReference type="GO" id="GO:0005737">
    <property type="term" value="C:cytoplasm"/>
    <property type="evidence" value="ECO:0007669"/>
    <property type="project" value="UniProtKB-ARBA"/>
</dbReference>
<dbReference type="GO" id="GO:0015935">
    <property type="term" value="C:small ribosomal subunit"/>
    <property type="evidence" value="ECO:0007669"/>
    <property type="project" value="TreeGrafter"/>
</dbReference>
<dbReference type="GO" id="GO:0003735">
    <property type="term" value="F:structural constituent of ribosome"/>
    <property type="evidence" value="ECO:0007669"/>
    <property type="project" value="InterPro"/>
</dbReference>
<dbReference type="GO" id="GO:0006412">
    <property type="term" value="P:translation"/>
    <property type="evidence" value="ECO:0007669"/>
    <property type="project" value="UniProtKB-UniRule"/>
</dbReference>
<dbReference type="FunFam" id="3.30.1320.10:FF:000002">
    <property type="entry name" value="30S ribosomal protein S16"/>
    <property type="match status" value="1"/>
</dbReference>
<dbReference type="Gene3D" id="3.30.1320.10">
    <property type="match status" value="1"/>
</dbReference>
<dbReference type="HAMAP" id="MF_00385">
    <property type="entry name" value="Ribosomal_bS16"/>
    <property type="match status" value="1"/>
</dbReference>
<dbReference type="InterPro" id="IPR000307">
    <property type="entry name" value="Ribosomal_bS16"/>
</dbReference>
<dbReference type="InterPro" id="IPR023803">
    <property type="entry name" value="Ribosomal_bS16_dom_sf"/>
</dbReference>
<dbReference type="NCBIfam" id="TIGR00002">
    <property type="entry name" value="S16"/>
    <property type="match status" value="1"/>
</dbReference>
<dbReference type="PANTHER" id="PTHR12919">
    <property type="entry name" value="30S RIBOSOMAL PROTEIN S16"/>
    <property type="match status" value="1"/>
</dbReference>
<dbReference type="PANTHER" id="PTHR12919:SF20">
    <property type="entry name" value="SMALL RIBOSOMAL SUBUNIT PROTEIN BS16M"/>
    <property type="match status" value="1"/>
</dbReference>
<dbReference type="Pfam" id="PF00886">
    <property type="entry name" value="Ribosomal_S16"/>
    <property type="match status" value="1"/>
</dbReference>
<dbReference type="SUPFAM" id="SSF54565">
    <property type="entry name" value="Ribosomal protein S16"/>
    <property type="match status" value="1"/>
</dbReference>
<evidence type="ECO:0000255" key="1">
    <source>
        <dbReference type="HAMAP-Rule" id="MF_00385"/>
    </source>
</evidence>
<evidence type="ECO:0000305" key="2"/>
<sequence>MAVKIRLTRLGSKRNPFYRIVVADARSPRDGRIIEQIGTYNPVDNSGENKVTIDEELALKWLKDGAKPTDTVHNILSREGILKTFDEQRHSK</sequence>
<organism>
    <name type="scientific">Staphylococcus carnosus (strain TM300)</name>
    <dbReference type="NCBI Taxonomy" id="396513"/>
    <lineage>
        <taxon>Bacteria</taxon>
        <taxon>Bacillati</taxon>
        <taxon>Bacillota</taxon>
        <taxon>Bacilli</taxon>
        <taxon>Bacillales</taxon>
        <taxon>Staphylococcaceae</taxon>
        <taxon>Staphylococcus</taxon>
    </lineage>
</organism>
<feature type="chain" id="PRO_1000134323" description="Small ribosomal subunit protein bS16">
    <location>
        <begin position="1"/>
        <end position="92"/>
    </location>
</feature>
<name>RS16_STACT</name>
<keyword id="KW-1185">Reference proteome</keyword>
<keyword id="KW-0687">Ribonucleoprotein</keyword>
<keyword id="KW-0689">Ribosomal protein</keyword>